<sequence>MPGNSLGKMFRITTFGESHGPMIGVIVDGVPAGLYISKEDIEFELSFRRPGKQFVSGRREKDEPEIVSGVYNGRTTGAPLTIIIRNNDVISSLYEEVKHKPRPGHADLPYIMKYGYENWDYRGGGRSSARETASRVAASAIAKKLLMLTDTVIGAHLKSLGPVELDEDVSFREIFCSKYSPVRASKKWLEEKYEELIKQATVEGDSWGGVAEVIADNVPIGLGEPVFDKLKSDLAKALLSIPAVVGFEYGLGFKASKMKGSEANDEIVIKDNGKLGWRYNKAGGILGGLSNGEKLVLRCAFKPTSSIRKPQKTVDLRTSEESTIRVIGRHDPAVAIRGVSVAEAMVALVLVDHALRSGYIPPVKLSEDQARIIEEKWRRYVEECKPMQESQ</sequence>
<proteinExistence type="inferred from homology"/>
<dbReference type="EC" id="4.2.3.5" evidence="1"/>
<dbReference type="EMBL" id="CP000077">
    <property type="protein sequence ID" value="AAY79605.1"/>
    <property type="molecule type" value="Genomic_DNA"/>
</dbReference>
<dbReference type="RefSeq" id="WP_011277106.1">
    <property type="nucleotide sequence ID" value="NC_007181.1"/>
</dbReference>
<dbReference type="SMR" id="Q4JC74"/>
<dbReference type="STRING" id="330779.Saci_0186"/>
<dbReference type="GeneID" id="14550714"/>
<dbReference type="GeneID" id="78440538"/>
<dbReference type="KEGG" id="sai:Saci_0186"/>
<dbReference type="PATRIC" id="fig|330779.12.peg.178"/>
<dbReference type="eggNOG" id="arCOG04133">
    <property type="taxonomic scope" value="Archaea"/>
</dbReference>
<dbReference type="HOGENOM" id="CLU_034547_0_0_2"/>
<dbReference type="UniPathway" id="UPA00053">
    <property type="reaction ID" value="UER00090"/>
</dbReference>
<dbReference type="Proteomes" id="UP000001018">
    <property type="component" value="Chromosome"/>
</dbReference>
<dbReference type="GO" id="GO:0005829">
    <property type="term" value="C:cytosol"/>
    <property type="evidence" value="ECO:0007669"/>
    <property type="project" value="TreeGrafter"/>
</dbReference>
<dbReference type="GO" id="GO:0004107">
    <property type="term" value="F:chorismate synthase activity"/>
    <property type="evidence" value="ECO:0007669"/>
    <property type="project" value="UniProtKB-UniRule"/>
</dbReference>
<dbReference type="GO" id="GO:0010181">
    <property type="term" value="F:FMN binding"/>
    <property type="evidence" value="ECO:0007669"/>
    <property type="project" value="TreeGrafter"/>
</dbReference>
<dbReference type="GO" id="GO:0008652">
    <property type="term" value="P:amino acid biosynthetic process"/>
    <property type="evidence" value="ECO:0007669"/>
    <property type="project" value="UniProtKB-KW"/>
</dbReference>
<dbReference type="GO" id="GO:0009073">
    <property type="term" value="P:aromatic amino acid family biosynthetic process"/>
    <property type="evidence" value="ECO:0007669"/>
    <property type="project" value="UniProtKB-KW"/>
</dbReference>
<dbReference type="GO" id="GO:0009423">
    <property type="term" value="P:chorismate biosynthetic process"/>
    <property type="evidence" value="ECO:0007669"/>
    <property type="project" value="UniProtKB-UniRule"/>
</dbReference>
<dbReference type="CDD" id="cd07304">
    <property type="entry name" value="Chorismate_synthase"/>
    <property type="match status" value="1"/>
</dbReference>
<dbReference type="FunFam" id="3.60.150.10:FF:000002">
    <property type="entry name" value="Chorismate synthase"/>
    <property type="match status" value="1"/>
</dbReference>
<dbReference type="Gene3D" id="3.60.150.10">
    <property type="entry name" value="Chorismate synthase AroC"/>
    <property type="match status" value="1"/>
</dbReference>
<dbReference type="HAMAP" id="MF_00300">
    <property type="entry name" value="Chorismate_synth"/>
    <property type="match status" value="1"/>
</dbReference>
<dbReference type="InterPro" id="IPR000453">
    <property type="entry name" value="Chorismate_synth"/>
</dbReference>
<dbReference type="InterPro" id="IPR035904">
    <property type="entry name" value="Chorismate_synth_AroC_sf"/>
</dbReference>
<dbReference type="InterPro" id="IPR020541">
    <property type="entry name" value="Chorismate_synthase_CS"/>
</dbReference>
<dbReference type="NCBIfam" id="TIGR00033">
    <property type="entry name" value="aroC"/>
    <property type="match status" value="1"/>
</dbReference>
<dbReference type="NCBIfam" id="NF003793">
    <property type="entry name" value="PRK05382.1"/>
    <property type="match status" value="1"/>
</dbReference>
<dbReference type="PANTHER" id="PTHR21085">
    <property type="entry name" value="CHORISMATE SYNTHASE"/>
    <property type="match status" value="1"/>
</dbReference>
<dbReference type="PANTHER" id="PTHR21085:SF0">
    <property type="entry name" value="CHORISMATE SYNTHASE"/>
    <property type="match status" value="1"/>
</dbReference>
<dbReference type="Pfam" id="PF01264">
    <property type="entry name" value="Chorismate_synt"/>
    <property type="match status" value="1"/>
</dbReference>
<dbReference type="PIRSF" id="PIRSF001456">
    <property type="entry name" value="Chorismate_synth"/>
    <property type="match status" value="1"/>
</dbReference>
<dbReference type="SUPFAM" id="SSF103263">
    <property type="entry name" value="Chorismate synthase, AroC"/>
    <property type="match status" value="1"/>
</dbReference>
<dbReference type="PROSITE" id="PS00787">
    <property type="entry name" value="CHORISMATE_SYNTHASE_1"/>
    <property type="match status" value="1"/>
</dbReference>
<dbReference type="PROSITE" id="PS00789">
    <property type="entry name" value="CHORISMATE_SYNTHASE_3"/>
    <property type="match status" value="1"/>
</dbReference>
<evidence type="ECO:0000255" key="1">
    <source>
        <dbReference type="HAMAP-Rule" id="MF_00300"/>
    </source>
</evidence>
<name>AROC_SULAC</name>
<feature type="chain" id="PRO_0000140696" description="Chorismate synthase">
    <location>
        <begin position="1"/>
        <end position="391"/>
    </location>
</feature>
<feature type="binding site" evidence="1">
    <location>
        <position position="48"/>
    </location>
    <ligand>
        <name>NADP(+)</name>
        <dbReference type="ChEBI" id="CHEBI:58349"/>
    </ligand>
</feature>
<feature type="binding site" evidence="1">
    <location>
        <begin position="126"/>
        <end position="128"/>
    </location>
    <ligand>
        <name>FMN</name>
        <dbReference type="ChEBI" id="CHEBI:58210"/>
    </ligand>
</feature>
<feature type="binding site" evidence="1">
    <location>
        <position position="287"/>
    </location>
    <ligand>
        <name>FMN</name>
        <dbReference type="ChEBI" id="CHEBI:58210"/>
    </ligand>
</feature>
<feature type="binding site" evidence="1">
    <location>
        <begin position="302"/>
        <end position="306"/>
    </location>
    <ligand>
        <name>FMN</name>
        <dbReference type="ChEBI" id="CHEBI:58210"/>
    </ligand>
</feature>
<feature type="binding site" evidence="1">
    <location>
        <position position="329"/>
    </location>
    <ligand>
        <name>FMN</name>
        <dbReference type="ChEBI" id="CHEBI:58210"/>
    </ligand>
</feature>
<protein>
    <recommendedName>
        <fullName evidence="1">Chorismate synthase</fullName>
        <shortName evidence="1">CS</shortName>
        <ecNumber evidence="1">4.2.3.5</ecNumber>
    </recommendedName>
    <alternativeName>
        <fullName evidence="1">5-enolpyruvylshikimate-3-phosphate phospholyase</fullName>
    </alternativeName>
</protein>
<reference key="1">
    <citation type="journal article" date="2005" name="J. Bacteriol.">
        <title>The genome of Sulfolobus acidocaldarius, a model organism of the Crenarchaeota.</title>
        <authorList>
            <person name="Chen L."/>
            <person name="Bruegger K."/>
            <person name="Skovgaard M."/>
            <person name="Redder P."/>
            <person name="She Q."/>
            <person name="Torarinsson E."/>
            <person name="Greve B."/>
            <person name="Awayez M."/>
            <person name="Zibat A."/>
            <person name="Klenk H.-P."/>
            <person name="Garrett R.A."/>
        </authorList>
    </citation>
    <scope>NUCLEOTIDE SEQUENCE [LARGE SCALE GENOMIC DNA]</scope>
    <source>
        <strain>ATCC 33909 / DSM 639 / JCM 8929 / NBRC 15157 / NCIMB 11770</strain>
    </source>
</reference>
<comment type="function">
    <text evidence="1">Catalyzes the anti-1,4-elimination of the C-3 phosphate and the C-6 proR hydrogen from 5-enolpyruvylshikimate-3-phosphate (EPSP) to yield chorismate, which is the branch point compound that serves as the starting substrate for the three terminal pathways of aromatic amino acid biosynthesis. This reaction introduces a second double bond into the aromatic ring system.</text>
</comment>
<comment type="catalytic activity">
    <reaction evidence="1">
        <text>5-O-(1-carboxyvinyl)-3-phosphoshikimate = chorismate + phosphate</text>
        <dbReference type="Rhea" id="RHEA:21020"/>
        <dbReference type="ChEBI" id="CHEBI:29748"/>
        <dbReference type="ChEBI" id="CHEBI:43474"/>
        <dbReference type="ChEBI" id="CHEBI:57701"/>
        <dbReference type="EC" id="4.2.3.5"/>
    </reaction>
</comment>
<comment type="cofactor">
    <cofactor evidence="1">
        <name>FMNH2</name>
        <dbReference type="ChEBI" id="CHEBI:57618"/>
    </cofactor>
    <text evidence="1">Reduced FMN (FMNH(2)).</text>
</comment>
<comment type="pathway">
    <text evidence="1">Metabolic intermediate biosynthesis; chorismate biosynthesis; chorismate from D-erythrose 4-phosphate and phosphoenolpyruvate: step 7/7.</text>
</comment>
<comment type="similarity">
    <text evidence="1">Belongs to the chorismate synthase family.</text>
</comment>
<organism>
    <name type="scientific">Sulfolobus acidocaldarius (strain ATCC 33909 / DSM 639 / JCM 8929 / NBRC 15157 / NCIMB 11770)</name>
    <dbReference type="NCBI Taxonomy" id="330779"/>
    <lineage>
        <taxon>Archaea</taxon>
        <taxon>Thermoproteota</taxon>
        <taxon>Thermoprotei</taxon>
        <taxon>Sulfolobales</taxon>
        <taxon>Sulfolobaceae</taxon>
        <taxon>Sulfolobus</taxon>
    </lineage>
</organism>
<keyword id="KW-0028">Amino-acid biosynthesis</keyword>
<keyword id="KW-0057">Aromatic amino acid biosynthesis</keyword>
<keyword id="KW-0274">FAD</keyword>
<keyword id="KW-0285">Flavoprotein</keyword>
<keyword id="KW-0288">FMN</keyword>
<keyword id="KW-0456">Lyase</keyword>
<keyword id="KW-0521">NADP</keyword>
<keyword id="KW-1185">Reference proteome</keyword>
<accession>Q4JC74</accession>
<gene>
    <name evidence="1" type="primary">aroC</name>
    <name type="ordered locus">Saci_0186</name>
</gene>